<protein>
    <recommendedName>
        <fullName>Tubulin beta-1 chain</fullName>
    </recommendedName>
    <alternativeName>
        <fullName>Beta-I tubulin</fullName>
    </alternativeName>
</protein>
<accession>Q25009</accession>
<organism>
    <name type="scientific">Homarus americanus</name>
    <name type="common">American lobster</name>
    <dbReference type="NCBI Taxonomy" id="6706"/>
    <lineage>
        <taxon>Eukaryota</taxon>
        <taxon>Metazoa</taxon>
        <taxon>Ecdysozoa</taxon>
        <taxon>Arthropoda</taxon>
        <taxon>Crustacea</taxon>
        <taxon>Multicrustacea</taxon>
        <taxon>Malacostraca</taxon>
        <taxon>Eumalacostraca</taxon>
        <taxon>Eucarida</taxon>
        <taxon>Decapoda</taxon>
        <taxon>Pleocyemata</taxon>
        <taxon>Astacidea</taxon>
        <taxon>Nephropoidea</taxon>
        <taxon>Nephropidae</taxon>
        <taxon>Homarus</taxon>
    </lineage>
</organism>
<dbReference type="EMBL" id="U41811">
    <property type="protein sequence ID" value="AAC47306.1"/>
    <property type="molecule type" value="mRNA"/>
</dbReference>
<dbReference type="SMR" id="Q25009"/>
<dbReference type="OrthoDB" id="1662883at2759"/>
<dbReference type="GO" id="GO:0005737">
    <property type="term" value="C:cytoplasm"/>
    <property type="evidence" value="ECO:0007669"/>
    <property type="project" value="UniProtKB-KW"/>
</dbReference>
<dbReference type="GO" id="GO:0005874">
    <property type="term" value="C:microtubule"/>
    <property type="evidence" value="ECO:0007669"/>
    <property type="project" value="UniProtKB-KW"/>
</dbReference>
<dbReference type="GO" id="GO:0005525">
    <property type="term" value="F:GTP binding"/>
    <property type="evidence" value="ECO:0007669"/>
    <property type="project" value="UniProtKB-KW"/>
</dbReference>
<dbReference type="GO" id="GO:0003924">
    <property type="term" value="F:GTPase activity"/>
    <property type="evidence" value="ECO:0007669"/>
    <property type="project" value="InterPro"/>
</dbReference>
<dbReference type="GO" id="GO:0046872">
    <property type="term" value="F:metal ion binding"/>
    <property type="evidence" value="ECO:0007669"/>
    <property type="project" value="UniProtKB-KW"/>
</dbReference>
<dbReference type="GO" id="GO:0005200">
    <property type="term" value="F:structural constituent of cytoskeleton"/>
    <property type="evidence" value="ECO:0007669"/>
    <property type="project" value="InterPro"/>
</dbReference>
<dbReference type="GO" id="GO:0007017">
    <property type="term" value="P:microtubule-based process"/>
    <property type="evidence" value="ECO:0007669"/>
    <property type="project" value="InterPro"/>
</dbReference>
<dbReference type="CDD" id="cd02187">
    <property type="entry name" value="beta_tubulin"/>
    <property type="match status" value="1"/>
</dbReference>
<dbReference type="FunFam" id="1.10.287.600:FF:000006">
    <property type="entry name" value="Tubulin beta chain"/>
    <property type="match status" value="1"/>
</dbReference>
<dbReference type="FunFam" id="3.30.1330.20:FF:000002">
    <property type="entry name" value="Tubulin beta chain"/>
    <property type="match status" value="1"/>
</dbReference>
<dbReference type="FunFam" id="3.40.50.1440:FF:000003">
    <property type="entry name" value="Tubulin beta chain"/>
    <property type="match status" value="1"/>
</dbReference>
<dbReference type="Gene3D" id="1.10.287.600">
    <property type="entry name" value="Helix hairpin bin"/>
    <property type="match status" value="1"/>
</dbReference>
<dbReference type="Gene3D" id="3.30.1330.20">
    <property type="entry name" value="Tubulin/FtsZ, C-terminal domain"/>
    <property type="match status" value="1"/>
</dbReference>
<dbReference type="Gene3D" id="3.40.50.1440">
    <property type="entry name" value="Tubulin/FtsZ, GTPase domain"/>
    <property type="match status" value="1"/>
</dbReference>
<dbReference type="InterPro" id="IPR013838">
    <property type="entry name" value="Beta-tubulin_BS"/>
</dbReference>
<dbReference type="InterPro" id="IPR002453">
    <property type="entry name" value="Beta_tubulin"/>
</dbReference>
<dbReference type="InterPro" id="IPR008280">
    <property type="entry name" value="Tub_FtsZ_C"/>
</dbReference>
<dbReference type="InterPro" id="IPR000217">
    <property type="entry name" value="Tubulin"/>
</dbReference>
<dbReference type="InterPro" id="IPR037103">
    <property type="entry name" value="Tubulin/FtsZ-like_C"/>
</dbReference>
<dbReference type="InterPro" id="IPR018316">
    <property type="entry name" value="Tubulin/FtsZ_2-layer-sand-dom"/>
</dbReference>
<dbReference type="InterPro" id="IPR036525">
    <property type="entry name" value="Tubulin/FtsZ_GTPase_sf"/>
</dbReference>
<dbReference type="InterPro" id="IPR023123">
    <property type="entry name" value="Tubulin_C"/>
</dbReference>
<dbReference type="InterPro" id="IPR017975">
    <property type="entry name" value="Tubulin_CS"/>
</dbReference>
<dbReference type="InterPro" id="IPR003008">
    <property type="entry name" value="Tubulin_FtsZ_GTPase"/>
</dbReference>
<dbReference type="PANTHER" id="PTHR11588">
    <property type="entry name" value="TUBULIN"/>
    <property type="match status" value="1"/>
</dbReference>
<dbReference type="Pfam" id="PF00091">
    <property type="entry name" value="Tubulin"/>
    <property type="match status" value="1"/>
</dbReference>
<dbReference type="Pfam" id="PF03953">
    <property type="entry name" value="Tubulin_C"/>
    <property type="match status" value="1"/>
</dbReference>
<dbReference type="PRINTS" id="PR01163">
    <property type="entry name" value="BETATUBULIN"/>
</dbReference>
<dbReference type="PRINTS" id="PR01161">
    <property type="entry name" value="TUBULIN"/>
</dbReference>
<dbReference type="SMART" id="SM00864">
    <property type="entry name" value="Tubulin"/>
    <property type="match status" value="1"/>
</dbReference>
<dbReference type="SMART" id="SM00865">
    <property type="entry name" value="Tubulin_C"/>
    <property type="match status" value="1"/>
</dbReference>
<dbReference type="SUPFAM" id="SSF55307">
    <property type="entry name" value="Tubulin C-terminal domain-like"/>
    <property type="match status" value="1"/>
</dbReference>
<dbReference type="SUPFAM" id="SSF52490">
    <property type="entry name" value="Tubulin nucleotide-binding domain-like"/>
    <property type="match status" value="1"/>
</dbReference>
<dbReference type="PROSITE" id="PS00227">
    <property type="entry name" value="TUBULIN"/>
    <property type="match status" value="1"/>
</dbReference>
<dbReference type="PROSITE" id="PS00228">
    <property type="entry name" value="TUBULIN_B_AUTOREG"/>
    <property type="match status" value="1"/>
</dbReference>
<reference key="1">
    <citation type="journal article" date="1996" name="Gene">
        <title>Multiple lobster tubulin isoforms are encoded by a simple gene family.</title>
        <authorList>
            <person name="Demers D.M."/>
            <person name="Metcalf A.E."/>
            <person name="Talbot P."/>
            <person name="Hyman B.C."/>
        </authorList>
    </citation>
    <scope>NUCLEOTIDE SEQUENCE [MRNA]</scope>
</reference>
<name>TBB1_HOMAM</name>
<proteinExistence type="evidence at transcript level"/>
<feature type="chain" id="PRO_0000048273" description="Tubulin beta-1 chain">
    <location>
        <begin position="1"/>
        <end position="451"/>
    </location>
</feature>
<feature type="region of interest" description="Disordered" evidence="3">
    <location>
        <begin position="430"/>
        <end position="451"/>
    </location>
</feature>
<feature type="compositionally biased region" description="Acidic residues" evidence="3">
    <location>
        <begin position="433"/>
        <end position="451"/>
    </location>
</feature>
<feature type="binding site" evidence="2">
    <location>
        <position position="11"/>
    </location>
    <ligand>
        <name>GTP</name>
        <dbReference type="ChEBI" id="CHEBI:37565"/>
    </ligand>
</feature>
<feature type="binding site" evidence="1">
    <location>
        <position position="73"/>
    </location>
    <ligand>
        <name>GTP</name>
        <dbReference type="ChEBI" id="CHEBI:37565"/>
    </ligand>
</feature>
<feature type="binding site" evidence="1">
    <location>
        <position position="73"/>
    </location>
    <ligand>
        <name>Mg(2+)</name>
        <dbReference type="ChEBI" id="CHEBI:18420"/>
    </ligand>
</feature>
<feature type="binding site" evidence="2">
    <location>
        <position position="142"/>
    </location>
    <ligand>
        <name>GTP</name>
        <dbReference type="ChEBI" id="CHEBI:37565"/>
    </ligand>
</feature>
<feature type="binding site" evidence="2">
    <location>
        <position position="146"/>
    </location>
    <ligand>
        <name>GTP</name>
        <dbReference type="ChEBI" id="CHEBI:37565"/>
    </ligand>
</feature>
<feature type="binding site" evidence="2">
    <location>
        <position position="147"/>
    </location>
    <ligand>
        <name>GTP</name>
        <dbReference type="ChEBI" id="CHEBI:37565"/>
    </ligand>
</feature>
<feature type="binding site" evidence="2">
    <location>
        <position position="148"/>
    </location>
    <ligand>
        <name>GTP</name>
        <dbReference type="ChEBI" id="CHEBI:37565"/>
    </ligand>
</feature>
<feature type="binding site" evidence="2">
    <location>
        <position position="208"/>
    </location>
    <ligand>
        <name>GTP</name>
        <dbReference type="ChEBI" id="CHEBI:37565"/>
    </ligand>
</feature>
<feature type="binding site" evidence="2">
    <location>
        <position position="230"/>
    </location>
    <ligand>
        <name>GTP</name>
        <dbReference type="ChEBI" id="CHEBI:37565"/>
    </ligand>
</feature>
<comment type="function">
    <text>Tubulin is the major constituent of microtubules, a cylinder consisting of laterally associated linear protofilaments composed of alpha- and beta-tubulin heterodimers. Microtubules grow by the addition of GTP-tubulin dimers to the microtubule end, where a stabilizing cap forms. Below the cap, tubulin dimers are in GDP-bound state, owing to GTPase activity of alpha-tubulin.</text>
</comment>
<comment type="cofactor">
    <cofactor evidence="1">
        <name>Mg(2+)</name>
        <dbReference type="ChEBI" id="CHEBI:18420"/>
    </cofactor>
</comment>
<comment type="subunit">
    <text>Dimer of alpha and beta chains. A typical microtubule is a hollow water-filled tube with an outer diameter of 25 nm and an inner diameter of 15 nM. Alpha-beta heterodimers associate head-to-tail to form protofilaments running lengthwise along the microtubule wall with the beta-tubulin subunit facing the microtubule plus end conferring a structural polarity. Microtubules usually have 13 protofilaments but different protofilament numbers can be found in some organisms and specialized cells.</text>
</comment>
<comment type="subcellular location">
    <subcellularLocation>
        <location>Cytoplasm</location>
        <location>Cytoskeleton</location>
    </subcellularLocation>
</comment>
<comment type="similarity">
    <text evidence="4">Belongs to the tubulin family.</text>
</comment>
<keyword id="KW-0963">Cytoplasm</keyword>
<keyword id="KW-0206">Cytoskeleton</keyword>
<keyword id="KW-0342">GTP-binding</keyword>
<keyword id="KW-0460">Magnesium</keyword>
<keyword id="KW-0479">Metal-binding</keyword>
<keyword id="KW-0493">Microtubule</keyword>
<keyword id="KW-0547">Nucleotide-binding</keyword>
<sequence length="451" mass="50743">MREIVHLQTGQCGNQIGTKFWEIISDEHGIQPTGEYTGADKDLMELQLERINVYYNEGNQGKYVPRAVLVDLEPGTMDSVRAGPHGQLFKPDSFVFGQSGAGNNWAKGHYTEGAELVDSVLDVVRKEAEKCDCLQGFQLTHSLGGGTGSGMGTLLVSKIREEFPDRIMNTFSVVPSPKVSDTVVEPYNATLSIHQLVENTDETYCIDNEALYDICFRTLKLQNPTYGDLNHLVSLTMSGVTTCFRFPGQLNADLRKLAVNMVPFPRLHFFMPGFAPLTARGSQQYRALTVPELTQQMFDAKNMMAACDPRHGRYLTVAAIFRGRMSMKEVDEQMYNIQNKNSSFFVEWIPNNVKTAVCDIPPRGIKMASTFIGNSTAIHELFKRVGEQFTAMFRRKAFLHWYTGEGMDEMEFTEAESNMNDLVSEYQQYQEATADDEAEFEEEGEVEGEYA</sequence>
<evidence type="ECO:0000250" key="1">
    <source>
        <dbReference type="UniProtKB" id="P68363"/>
    </source>
</evidence>
<evidence type="ECO:0000250" key="2">
    <source>
        <dbReference type="UniProtKB" id="Q13509"/>
    </source>
</evidence>
<evidence type="ECO:0000256" key="3">
    <source>
        <dbReference type="SAM" id="MobiDB-lite"/>
    </source>
</evidence>
<evidence type="ECO:0000305" key="4"/>